<comment type="interaction">
    <interactant intactId="EBI-554965">
        <id>P0A8E5</id>
    </interactant>
    <interactant intactId="EBI-547513">
        <id>P0ACJ8</id>
        <label>crp</label>
    </interactant>
    <organismsDiffer>false</organismsDiffer>
    <experiments>4</experiments>
</comment>
<comment type="similarity">
    <text evidence="1">Belongs to the UPF0231 family.</text>
</comment>
<keyword id="KW-1185">Reference proteome</keyword>
<protein>
    <recommendedName>
        <fullName>UPF0231 protein YacL</fullName>
    </recommendedName>
</protein>
<accession>P0A8E5</accession>
<accession>P45567</accession>
<accession>P75653</accession>
<accession>Q8X955</accession>
<proteinExistence type="evidence at protein level"/>
<feature type="chain" id="PRO_0000214646" description="UPF0231 protein YacL">
    <location>
        <begin position="1"/>
        <end position="120"/>
    </location>
</feature>
<gene>
    <name type="primary">yacL</name>
    <name type="ordered locus">b0119</name>
    <name type="ordered locus">JW0115</name>
</gene>
<sequence length="120" mass="13942">MDYEFLRDITGVVKVRMSMGHEVVGHWFNEEVKENLALLDEVEQAAHALKGSERSWQRAGHEYTLWMDGEEVMVRANQLEFAGDEMEEGMNYYDEESLSLCGVEDFLQVVAAYRNFVQQK</sequence>
<name>YACL_ECOLI</name>
<dbReference type="EMBL" id="U00096">
    <property type="protein sequence ID" value="AAC73230.2"/>
    <property type="molecule type" value="Genomic_DNA"/>
</dbReference>
<dbReference type="EMBL" id="AP009048">
    <property type="protein sequence ID" value="BAB96693.1"/>
    <property type="molecule type" value="Genomic_DNA"/>
</dbReference>
<dbReference type="EMBL" id="J02804">
    <property type="status" value="NOT_ANNOTATED_CDS"/>
    <property type="molecule type" value="Genomic_DNA"/>
</dbReference>
<dbReference type="PIR" id="G64734">
    <property type="entry name" value="G64734"/>
</dbReference>
<dbReference type="RefSeq" id="NP_414661.2">
    <property type="nucleotide sequence ID" value="NC_000913.3"/>
</dbReference>
<dbReference type="RefSeq" id="WP_000384306.1">
    <property type="nucleotide sequence ID" value="NZ_STEB01000010.1"/>
</dbReference>
<dbReference type="BioGRID" id="4262030">
    <property type="interactions" value="24"/>
</dbReference>
<dbReference type="BioGRID" id="849210">
    <property type="interactions" value="2"/>
</dbReference>
<dbReference type="DIP" id="DIP-47876N"/>
<dbReference type="FunCoup" id="P0A8E5">
    <property type="interactions" value="170"/>
</dbReference>
<dbReference type="IntAct" id="P0A8E5">
    <property type="interactions" value="56"/>
</dbReference>
<dbReference type="STRING" id="511145.b0119"/>
<dbReference type="jPOST" id="P0A8E5"/>
<dbReference type="PaxDb" id="511145-b0119"/>
<dbReference type="EnsemblBacteria" id="AAC73230">
    <property type="protein sequence ID" value="AAC73230"/>
    <property type="gene ID" value="b0119"/>
</dbReference>
<dbReference type="GeneID" id="93777317"/>
<dbReference type="GeneID" id="944809"/>
<dbReference type="KEGG" id="ecj:JW0115"/>
<dbReference type="KEGG" id="eco:b0119"/>
<dbReference type="KEGG" id="ecoc:C3026_00500"/>
<dbReference type="PATRIC" id="fig|511145.12.peg.121"/>
<dbReference type="EchoBASE" id="EB2489"/>
<dbReference type="eggNOG" id="COG3112">
    <property type="taxonomic scope" value="Bacteria"/>
</dbReference>
<dbReference type="HOGENOM" id="CLU_139226_0_0_6"/>
<dbReference type="InParanoid" id="P0A8E5"/>
<dbReference type="OMA" id="FSMDHEA"/>
<dbReference type="OrthoDB" id="5739292at2"/>
<dbReference type="PhylomeDB" id="P0A8E5"/>
<dbReference type="BioCyc" id="EcoCyc:EG12605-MONOMER"/>
<dbReference type="PRO" id="PR:P0A8E5"/>
<dbReference type="Proteomes" id="UP000000625">
    <property type="component" value="Chromosome"/>
</dbReference>
<dbReference type="HAMAP" id="MF_01053">
    <property type="entry name" value="UPF0231"/>
    <property type="match status" value="1"/>
</dbReference>
<dbReference type="InterPro" id="IPR008249">
    <property type="entry name" value="UPF0231"/>
</dbReference>
<dbReference type="NCBIfam" id="NF003574">
    <property type="entry name" value="PRK05248.1-1"/>
    <property type="match status" value="1"/>
</dbReference>
<dbReference type="NCBIfam" id="NF003576">
    <property type="entry name" value="PRK05248.1-3"/>
    <property type="match status" value="1"/>
</dbReference>
<dbReference type="Pfam" id="PF06062">
    <property type="entry name" value="UPF0231"/>
    <property type="match status" value="1"/>
</dbReference>
<dbReference type="PIRSF" id="PIRSF006287">
    <property type="entry name" value="UCP006287"/>
    <property type="match status" value="1"/>
</dbReference>
<reference key="1">
    <citation type="journal article" date="1994" name="Nucleic Acids Res.">
        <title>Systematic sequencing of the Escherichia coli genome: analysis of the 2.4-4.1 min (110,917-193,643 bp) region.</title>
        <authorList>
            <person name="Fujita N."/>
            <person name="Mori H."/>
            <person name="Yura T."/>
            <person name="Ishihama A."/>
        </authorList>
    </citation>
    <scope>NUCLEOTIDE SEQUENCE [LARGE SCALE GENOMIC DNA]</scope>
    <source>
        <strain>K12 / W3110 / ATCC 27325 / DSM 5911</strain>
    </source>
</reference>
<reference key="2">
    <citation type="journal article" date="1997" name="Science">
        <title>The complete genome sequence of Escherichia coli K-12.</title>
        <authorList>
            <person name="Blattner F.R."/>
            <person name="Plunkett G. III"/>
            <person name="Bloch C.A."/>
            <person name="Perna N.T."/>
            <person name="Burland V."/>
            <person name="Riley M."/>
            <person name="Collado-Vides J."/>
            <person name="Glasner J.D."/>
            <person name="Rode C.K."/>
            <person name="Mayhew G.F."/>
            <person name="Gregor J."/>
            <person name="Davis N.W."/>
            <person name="Kirkpatrick H.A."/>
            <person name="Goeden M.A."/>
            <person name="Rose D.J."/>
            <person name="Mau B."/>
            <person name="Shao Y."/>
        </authorList>
    </citation>
    <scope>NUCLEOTIDE SEQUENCE [LARGE SCALE GENOMIC DNA]</scope>
    <source>
        <strain>K12 / MG1655 / ATCC 47076</strain>
    </source>
</reference>
<reference key="3">
    <citation type="journal article" date="2006" name="Mol. Syst. Biol.">
        <title>Highly accurate genome sequences of Escherichia coli K-12 strains MG1655 and W3110.</title>
        <authorList>
            <person name="Hayashi K."/>
            <person name="Morooka N."/>
            <person name="Yamamoto Y."/>
            <person name="Fujita K."/>
            <person name="Isono K."/>
            <person name="Choi S."/>
            <person name="Ohtsubo E."/>
            <person name="Baba T."/>
            <person name="Wanner B.L."/>
            <person name="Mori H."/>
            <person name="Horiuchi T."/>
        </authorList>
    </citation>
    <scope>NUCLEOTIDE SEQUENCE [LARGE SCALE GENOMIC DNA]</scope>
    <source>
        <strain>K12 / W3110 / ATCC 27325 / DSM 5911</strain>
    </source>
</reference>
<reference key="4">
    <citation type="journal article" date="1989" name="J. Bacteriol.">
        <title>Spermidine biosynthesis in Escherichia coli: promoter and termination regions of the speED operon.</title>
        <authorList>
            <person name="Xie Q.W."/>
            <person name="Tabor C.W."/>
            <person name="Tabor H."/>
        </authorList>
    </citation>
    <scope>NUCLEOTIDE SEQUENCE [GENOMIC DNA] OF 18-120</scope>
    <source>
        <strain>K12</strain>
    </source>
</reference>
<reference key="5">
    <citation type="journal article" date="1995" name="Nucleic Acids Res.">
        <title>Detection of new genes in a bacterial genome using Markov models for three gene classes.</title>
        <authorList>
            <person name="Borodovsky M."/>
            <person name="McIninch J."/>
            <person name="Koonin E.V."/>
            <person name="Rudd K.E."/>
            <person name="Medigue C."/>
            <person name="Danchin A."/>
        </authorList>
    </citation>
    <scope>IDENTIFICATION</scope>
</reference>
<organism>
    <name type="scientific">Escherichia coli (strain K12)</name>
    <dbReference type="NCBI Taxonomy" id="83333"/>
    <lineage>
        <taxon>Bacteria</taxon>
        <taxon>Pseudomonadati</taxon>
        <taxon>Pseudomonadota</taxon>
        <taxon>Gammaproteobacteria</taxon>
        <taxon>Enterobacterales</taxon>
        <taxon>Enterobacteriaceae</taxon>
        <taxon>Escherichia</taxon>
    </lineage>
</organism>
<evidence type="ECO:0000305" key="1"/>